<protein>
    <recommendedName>
        <fullName evidence="1">Beta-ketoacyl-[acyl-carrier-protein] synthase III</fullName>
        <shortName evidence="1">Beta-ketoacyl-ACP synthase III</shortName>
        <shortName evidence="1">KAS III</shortName>
        <ecNumber evidence="1">2.3.1.180</ecNumber>
    </recommendedName>
    <alternativeName>
        <fullName evidence="1">3-oxoacyl-[acyl-carrier-protein] synthase 3</fullName>
    </alternativeName>
    <alternativeName>
        <fullName evidence="1">3-oxoacyl-[acyl-carrier-protein] synthase III</fullName>
    </alternativeName>
</protein>
<feature type="chain" id="PRO_1000187874" description="Beta-ketoacyl-[acyl-carrier-protein] synthase III">
    <location>
        <begin position="1"/>
        <end position="324"/>
    </location>
</feature>
<feature type="region of interest" description="ACP-binding" evidence="1">
    <location>
        <begin position="252"/>
        <end position="256"/>
    </location>
</feature>
<feature type="active site" evidence="1">
    <location>
        <position position="112"/>
    </location>
</feature>
<feature type="active site" evidence="1">
    <location>
        <position position="251"/>
    </location>
</feature>
<feature type="active site" evidence="1">
    <location>
        <position position="281"/>
    </location>
</feature>
<comment type="function">
    <text evidence="1">Catalyzes the condensation reaction of fatty acid synthesis by the addition to an acyl acceptor of two carbons from malonyl-ACP. Catalyzes the first condensation reaction which initiates fatty acid synthesis and may therefore play a role in governing the total rate of fatty acid production. Possesses both acetoacetyl-ACP synthase and acetyl transacylase activities. Its substrate specificity determines the biosynthesis of branched-chain and/or straight-chain of fatty acids.</text>
</comment>
<comment type="catalytic activity">
    <reaction evidence="1">
        <text>malonyl-[ACP] + acetyl-CoA + H(+) = 3-oxobutanoyl-[ACP] + CO2 + CoA</text>
        <dbReference type="Rhea" id="RHEA:12080"/>
        <dbReference type="Rhea" id="RHEA-COMP:9623"/>
        <dbReference type="Rhea" id="RHEA-COMP:9625"/>
        <dbReference type="ChEBI" id="CHEBI:15378"/>
        <dbReference type="ChEBI" id="CHEBI:16526"/>
        <dbReference type="ChEBI" id="CHEBI:57287"/>
        <dbReference type="ChEBI" id="CHEBI:57288"/>
        <dbReference type="ChEBI" id="CHEBI:78449"/>
        <dbReference type="ChEBI" id="CHEBI:78450"/>
        <dbReference type="EC" id="2.3.1.180"/>
    </reaction>
</comment>
<comment type="pathway">
    <text evidence="1">Lipid metabolism; fatty acid biosynthesis.</text>
</comment>
<comment type="subunit">
    <text evidence="1">Homodimer.</text>
</comment>
<comment type="subcellular location">
    <subcellularLocation>
        <location evidence="1">Cytoplasm</location>
    </subcellularLocation>
</comment>
<comment type="domain">
    <text evidence="1">The last Arg residue of the ACP-binding site is essential for the weak association between ACP/AcpP and FabH.</text>
</comment>
<comment type="similarity">
    <text evidence="1">Belongs to the thiolase-like superfamily. FabH family.</text>
</comment>
<gene>
    <name evidence="1" type="primary">fabH</name>
    <name type="ordered locus">Lreu_0991</name>
</gene>
<dbReference type="EC" id="2.3.1.180" evidence="1"/>
<dbReference type="EMBL" id="CP000705">
    <property type="protein sequence ID" value="ABQ83252.1"/>
    <property type="molecule type" value="Genomic_DNA"/>
</dbReference>
<dbReference type="RefSeq" id="WP_003667751.1">
    <property type="nucleotide sequence ID" value="NC_009513.1"/>
</dbReference>
<dbReference type="SMR" id="A5VK78"/>
<dbReference type="STRING" id="557436.Lreu_0991"/>
<dbReference type="KEGG" id="lre:Lreu_0991"/>
<dbReference type="PATRIC" id="fig|557436.17.peg.1404"/>
<dbReference type="eggNOG" id="COG0332">
    <property type="taxonomic scope" value="Bacteria"/>
</dbReference>
<dbReference type="HOGENOM" id="CLU_039592_4_1_9"/>
<dbReference type="OMA" id="WGSEGDK"/>
<dbReference type="UniPathway" id="UPA00094"/>
<dbReference type="Proteomes" id="UP000001991">
    <property type="component" value="Chromosome"/>
</dbReference>
<dbReference type="GO" id="GO:0005737">
    <property type="term" value="C:cytoplasm"/>
    <property type="evidence" value="ECO:0007669"/>
    <property type="project" value="UniProtKB-SubCell"/>
</dbReference>
<dbReference type="GO" id="GO:0004315">
    <property type="term" value="F:3-oxoacyl-[acyl-carrier-protein] synthase activity"/>
    <property type="evidence" value="ECO:0007669"/>
    <property type="project" value="InterPro"/>
</dbReference>
<dbReference type="GO" id="GO:0033818">
    <property type="term" value="F:beta-ketoacyl-acyl-carrier-protein synthase III activity"/>
    <property type="evidence" value="ECO:0007669"/>
    <property type="project" value="UniProtKB-UniRule"/>
</dbReference>
<dbReference type="GO" id="GO:0006633">
    <property type="term" value="P:fatty acid biosynthetic process"/>
    <property type="evidence" value="ECO:0007669"/>
    <property type="project" value="UniProtKB-UniRule"/>
</dbReference>
<dbReference type="CDD" id="cd00830">
    <property type="entry name" value="KAS_III"/>
    <property type="match status" value="1"/>
</dbReference>
<dbReference type="Gene3D" id="3.40.47.10">
    <property type="match status" value="1"/>
</dbReference>
<dbReference type="HAMAP" id="MF_01815">
    <property type="entry name" value="FabH"/>
    <property type="match status" value="1"/>
</dbReference>
<dbReference type="InterPro" id="IPR013747">
    <property type="entry name" value="ACP_syn_III_C"/>
</dbReference>
<dbReference type="InterPro" id="IPR013751">
    <property type="entry name" value="ACP_syn_III_N"/>
</dbReference>
<dbReference type="InterPro" id="IPR004655">
    <property type="entry name" value="FabH"/>
</dbReference>
<dbReference type="InterPro" id="IPR016039">
    <property type="entry name" value="Thiolase-like"/>
</dbReference>
<dbReference type="NCBIfam" id="TIGR00747">
    <property type="entry name" value="fabH"/>
    <property type="match status" value="1"/>
</dbReference>
<dbReference type="NCBIfam" id="NF006829">
    <property type="entry name" value="PRK09352.1"/>
    <property type="match status" value="1"/>
</dbReference>
<dbReference type="PANTHER" id="PTHR43091">
    <property type="entry name" value="3-OXOACYL-[ACYL-CARRIER-PROTEIN] SYNTHASE"/>
    <property type="match status" value="1"/>
</dbReference>
<dbReference type="PANTHER" id="PTHR43091:SF1">
    <property type="entry name" value="BETA-KETOACYL-[ACYL-CARRIER-PROTEIN] SYNTHASE III, CHLOROPLASTIC"/>
    <property type="match status" value="1"/>
</dbReference>
<dbReference type="Pfam" id="PF08545">
    <property type="entry name" value="ACP_syn_III"/>
    <property type="match status" value="1"/>
</dbReference>
<dbReference type="Pfam" id="PF08541">
    <property type="entry name" value="ACP_syn_III_C"/>
    <property type="match status" value="1"/>
</dbReference>
<dbReference type="SUPFAM" id="SSF53901">
    <property type="entry name" value="Thiolase-like"/>
    <property type="match status" value="1"/>
</dbReference>
<name>FABH_LIMRD</name>
<reference key="1">
    <citation type="journal article" date="2011" name="PLoS Genet.">
        <title>The evolution of host specialization in the vertebrate gut symbiont Lactobacillus reuteri.</title>
        <authorList>
            <person name="Frese S.A."/>
            <person name="Benson A.K."/>
            <person name="Tannock G.W."/>
            <person name="Loach D.M."/>
            <person name="Kim J."/>
            <person name="Zhang M."/>
            <person name="Oh P.L."/>
            <person name="Heng N.C."/>
            <person name="Patil P.B."/>
            <person name="Juge N."/>
            <person name="Mackenzie D.A."/>
            <person name="Pearson B.M."/>
            <person name="Lapidus A."/>
            <person name="Dalin E."/>
            <person name="Tice H."/>
            <person name="Goltsman E."/>
            <person name="Land M."/>
            <person name="Hauser L."/>
            <person name="Ivanova N."/>
            <person name="Kyrpides N.C."/>
            <person name="Walter J."/>
        </authorList>
    </citation>
    <scope>NUCLEOTIDE SEQUENCE [LARGE SCALE GENOMIC DNA]</scope>
    <source>
        <strain>DSM 20016</strain>
    </source>
</reference>
<sequence length="324" mass="34911">MQNLRITSTASYHPPLNITNQQLSTIMDTSDEWIKTRTGIHQRYISNIENTSDLALNVGNQLLTNANLKTTELDLIIIATMSPDAYTPSTAAIVQGELGAKNAIAFDISAACTGFIYAMNTAELMLKSSNWQNAMVIGAEVLSKLIDWKDRSTAVLFGDGAGGVLLQKTTTATPLILGRDLHTFGDLGDKIVAGKTTPKAGFPKQLTSLSPFAMAGRDVYRFATHEVPRSIASAVQQANLKLDDIDYFLLHQANERIINQIAKRLGQPITKFPMNISEYGNTGAASEPILLTQAVAHELVKPGNIIAMSGFGGGLSTGTIILNY</sequence>
<organism>
    <name type="scientific">Limosilactobacillus reuteri (strain DSM 20016)</name>
    <name type="common">Lactobacillus reuteri</name>
    <dbReference type="NCBI Taxonomy" id="557436"/>
    <lineage>
        <taxon>Bacteria</taxon>
        <taxon>Bacillati</taxon>
        <taxon>Bacillota</taxon>
        <taxon>Bacilli</taxon>
        <taxon>Lactobacillales</taxon>
        <taxon>Lactobacillaceae</taxon>
        <taxon>Limosilactobacillus</taxon>
    </lineage>
</organism>
<keyword id="KW-0012">Acyltransferase</keyword>
<keyword id="KW-0963">Cytoplasm</keyword>
<keyword id="KW-0275">Fatty acid biosynthesis</keyword>
<keyword id="KW-0276">Fatty acid metabolism</keyword>
<keyword id="KW-0444">Lipid biosynthesis</keyword>
<keyword id="KW-0443">Lipid metabolism</keyword>
<keyword id="KW-0511">Multifunctional enzyme</keyword>
<keyword id="KW-1185">Reference proteome</keyword>
<keyword id="KW-0808">Transferase</keyword>
<accession>A5VK78</accession>
<evidence type="ECO:0000255" key="1">
    <source>
        <dbReference type="HAMAP-Rule" id="MF_01815"/>
    </source>
</evidence>
<proteinExistence type="inferred from homology"/>